<accession>Q45829</accession>
<accession>Q97EN4</accession>
<sequence length="355" mass="38942">MYRLLIINPGSTSTKIGIYDDEKEIFEKTLRHSAEEIEKYNTIFDQFQFRKNVILDALKEANIEVSSLNAVVGRGGLLKPIVSGTYAVNQKMLEDLKVGVQGQHASNLGGIIANEIAKEINVPAYIVDPVVVDELDEVSRISGMADIPRKSIFHALNQKAVARRYAKEVGKKYEDLNLIVVHMGGGTSVGTHKDGRVIEVNNTLDGEGPFSPERSGGVPIGDLVRLCFSNKYTYEEVMKKINGKGGVVSYLNTIDFKAVVDKALEGDKKCALIYEAFTFQVAKEIGKCSTVLKGNVDAIILTGGIAYNEHVCNAIEDRVKFIAPVVRYGGEDELLALAEGGLRVLRGEEKAKEYK</sequence>
<proteinExistence type="inferred from homology"/>
<feature type="chain" id="PRO_0000107657" description="Butyrate kinase 1">
    <location>
        <begin position="1"/>
        <end position="355"/>
    </location>
</feature>
<feature type="sequence conflict" description="In Ref. 1; AAA75487." evidence="2" ref="1">
    <original>A</original>
    <variation>R</variation>
    <location>
        <position position="338"/>
    </location>
</feature>
<gene>
    <name type="primary">buk1</name>
    <name type="synonym">buk</name>
    <name type="ordered locus">CA_C3075</name>
</gene>
<protein>
    <recommendedName>
        <fullName>Butyrate kinase 1</fullName>
        <shortName>BK 1</shortName>
        <shortName>BKI</shortName>
        <ecNumber>2.7.2.7</ecNumber>
    </recommendedName>
</protein>
<comment type="function">
    <text evidence="1">Catalyzes the conversion of butyryl-CoA through butyryl phosphate to butyrate.</text>
</comment>
<comment type="catalytic activity">
    <reaction>
        <text>butanoate + ATP = butanoyl phosphate + ADP</text>
        <dbReference type="Rhea" id="RHEA:13585"/>
        <dbReference type="ChEBI" id="CHEBI:17968"/>
        <dbReference type="ChEBI" id="CHEBI:30616"/>
        <dbReference type="ChEBI" id="CHEBI:58079"/>
        <dbReference type="ChEBI" id="CHEBI:456216"/>
        <dbReference type="EC" id="2.7.2.7"/>
    </reaction>
</comment>
<comment type="pathway">
    <text>Lipid metabolism; butanoate metabolism.</text>
</comment>
<comment type="subcellular location">
    <subcellularLocation>
        <location evidence="1">Cytoplasm</location>
    </subcellularLocation>
</comment>
<comment type="similarity">
    <text evidence="2">Belongs to the acetokinase family.</text>
</comment>
<keyword id="KW-0067">ATP-binding</keyword>
<keyword id="KW-0963">Cytoplasm</keyword>
<keyword id="KW-0418">Kinase</keyword>
<keyword id="KW-0547">Nucleotide-binding</keyword>
<keyword id="KW-1185">Reference proteome</keyword>
<keyword id="KW-0808">Transferase</keyword>
<dbReference type="EC" id="2.7.2.7"/>
<dbReference type="EMBL" id="L14744">
    <property type="protein sequence ID" value="AAA75487.1"/>
    <property type="molecule type" value="Genomic_DNA"/>
</dbReference>
<dbReference type="EMBL" id="AE001437">
    <property type="protein sequence ID" value="AAK81015.1"/>
    <property type="molecule type" value="Genomic_DNA"/>
</dbReference>
<dbReference type="PIR" id="D97278">
    <property type="entry name" value="D97278"/>
</dbReference>
<dbReference type="PIR" id="I40819">
    <property type="entry name" value="I40819"/>
</dbReference>
<dbReference type="RefSeq" id="NP_349675.1">
    <property type="nucleotide sequence ID" value="NC_003030.1"/>
</dbReference>
<dbReference type="RefSeq" id="WP_010966356.1">
    <property type="nucleotide sequence ID" value="NC_003030.1"/>
</dbReference>
<dbReference type="SMR" id="Q45829"/>
<dbReference type="STRING" id="272562.CA_C3075"/>
<dbReference type="GeneID" id="44999562"/>
<dbReference type="KEGG" id="cac:CA_C3075"/>
<dbReference type="PATRIC" id="fig|272562.8.peg.3258"/>
<dbReference type="eggNOG" id="COG3426">
    <property type="taxonomic scope" value="Bacteria"/>
</dbReference>
<dbReference type="HOGENOM" id="CLU_048716_0_0_9"/>
<dbReference type="OrthoDB" id="9771859at2"/>
<dbReference type="BioCyc" id="MetaCyc:BUKCLOS-MONOMER"/>
<dbReference type="BRENDA" id="2.7.2.7">
    <property type="organism ID" value="1452"/>
</dbReference>
<dbReference type="UniPathway" id="UPA00863"/>
<dbReference type="Proteomes" id="UP000000814">
    <property type="component" value="Chromosome"/>
</dbReference>
<dbReference type="GO" id="GO:0005737">
    <property type="term" value="C:cytoplasm"/>
    <property type="evidence" value="ECO:0007669"/>
    <property type="project" value="UniProtKB-SubCell"/>
</dbReference>
<dbReference type="GO" id="GO:0008776">
    <property type="term" value="F:acetate kinase activity"/>
    <property type="evidence" value="ECO:0007669"/>
    <property type="project" value="TreeGrafter"/>
</dbReference>
<dbReference type="GO" id="GO:0005524">
    <property type="term" value="F:ATP binding"/>
    <property type="evidence" value="ECO:0007669"/>
    <property type="project" value="UniProtKB-KW"/>
</dbReference>
<dbReference type="GO" id="GO:0047761">
    <property type="term" value="F:butyrate kinase activity"/>
    <property type="evidence" value="ECO:0000314"/>
    <property type="project" value="MENGO"/>
</dbReference>
<dbReference type="GO" id="GO:0006083">
    <property type="term" value="P:acetate metabolic process"/>
    <property type="evidence" value="ECO:0007669"/>
    <property type="project" value="TreeGrafter"/>
</dbReference>
<dbReference type="GO" id="GO:0019605">
    <property type="term" value="P:butyrate metabolic process"/>
    <property type="evidence" value="ECO:0007669"/>
    <property type="project" value="UniProtKB-UniPathway"/>
</dbReference>
<dbReference type="CDD" id="cd24011">
    <property type="entry name" value="ASKHA_NBD_BK"/>
    <property type="match status" value="1"/>
</dbReference>
<dbReference type="Gene3D" id="3.30.420.40">
    <property type="match status" value="2"/>
</dbReference>
<dbReference type="HAMAP" id="MF_00542">
    <property type="entry name" value="Butyrate_kinase"/>
    <property type="match status" value="1"/>
</dbReference>
<dbReference type="InterPro" id="IPR000890">
    <property type="entry name" value="Aliphatic_acid_kin_short-chain"/>
</dbReference>
<dbReference type="InterPro" id="IPR023865">
    <property type="entry name" value="Aliphatic_acid_kinase_CS"/>
</dbReference>
<dbReference type="InterPro" id="IPR043129">
    <property type="entry name" value="ATPase_NBD"/>
</dbReference>
<dbReference type="InterPro" id="IPR011245">
    <property type="entry name" value="Butyrate_kin"/>
</dbReference>
<dbReference type="NCBIfam" id="TIGR02707">
    <property type="entry name" value="butyr_kinase"/>
    <property type="match status" value="1"/>
</dbReference>
<dbReference type="NCBIfam" id="NF002834">
    <property type="entry name" value="PRK03011.1-5"/>
    <property type="match status" value="1"/>
</dbReference>
<dbReference type="PANTHER" id="PTHR21060">
    <property type="entry name" value="ACETATE KINASE"/>
    <property type="match status" value="1"/>
</dbReference>
<dbReference type="PANTHER" id="PTHR21060:SF3">
    <property type="entry name" value="BUTYRATE KINASE 2-RELATED"/>
    <property type="match status" value="1"/>
</dbReference>
<dbReference type="Pfam" id="PF00871">
    <property type="entry name" value="Acetate_kinase"/>
    <property type="match status" value="1"/>
</dbReference>
<dbReference type="PIRSF" id="PIRSF036458">
    <property type="entry name" value="Butyrate_kin"/>
    <property type="match status" value="1"/>
</dbReference>
<dbReference type="PRINTS" id="PR00471">
    <property type="entry name" value="ACETATEKNASE"/>
</dbReference>
<dbReference type="SUPFAM" id="SSF53067">
    <property type="entry name" value="Actin-like ATPase domain"/>
    <property type="match status" value="2"/>
</dbReference>
<dbReference type="PROSITE" id="PS01075">
    <property type="entry name" value="ACETATE_KINASE_1"/>
    <property type="match status" value="1"/>
</dbReference>
<dbReference type="PROSITE" id="PS01076">
    <property type="entry name" value="ACETATE_KINASE_2"/>
    <property type="match status" value="1"/>
</dbReference>
<evidence type="ECO:0000250" key="1"/>
<evidence type="ECO:0000305" key="2"/>
<name>BUK1_CLOAB</name>
<reference key="1">
    <citation type="journal article" date="1993" name="Gene">
        <title>Sequence and arrangement of two genes of the butyrate-synthesis pathway of Clostridium acetobutylicum ATCC 824.</title>
        <authorList>
            <person name="Walter K.A."/>
            <person name="Nair R.V."/>
            <person name="Cary J.W."/>
            <person name="Bennett G.N."/>
            <person name="Papoutsakis E.T."/>
        </authorList>
    </citation>
    <scope>NUCLEOTIDE SEQUENCE [GENOMIC DNA]</scope>
    <source>
        <strain>ATCC 824 / DSM 792 / JCM 1419 / IAM 19013 / LMG 5710 / NBRC 13948 / NRRL B-527 / VKM B-1787 / 2291 / W</strain>
    </source>
</reference>
<reference key="2">
    <citation type="journal article" date="2001" name="J. Bacteriol.">
        <title>Genome sequence and comparative analysis of the solvent-producing bacterium Clostridium acetobutylicum.</title>
        <authorList>
            <person name="Noelling J."/>
            <person name="Breton G."/>
            <person name="Omelchenko M.V."/>
            <person name="Makarova K.S."/>
            <person name="Zeng Q."/>
            <person name="Gibson R."/>
            <person name="Lee H.M."/>
            <person name="Dubois J."/>
            <person name="Qiu D."/>
            <person name="Hitti J."/>
            <person name="Wolf Y.I."/>
            <person name="Tatusov R.L."/>
            <person name="Sabathe F."/>
            <person name="Doucette-Stamm L.A."/>
            <person name="Soucaille P."/>
            <person name="Daly M.J."/>
            <person name="Bennett G.N."/>
            <person name="Koonin E.V."/>
            <person name="Smith D.R."/>
        </authorList>
    </citation>
    <scope>NUCLEOTIDE SEQUENCE [LARGE SCALE GENOMIC DNA]</scope>
    <source>
        <strain>ATCC 824 / DSM 792 / JCM 1419 / IAM 19013 / LMG 5710 / NBRC 13948 / NRRL B-527 / VKM B-1787 / 2291 / W</strain>
    </source>
</reference>
<organism>
    <name type="scientific">Clostridium acetobutylicum (strain ATCC 824 / DSM 792 / JCM 1419 / IAM 19013 / LMG 5710 / NBRC 13948 / NRRL B-527 / VKM B-1787 / 2291 / W)</name>
    <dbReference type="NCBI Taxonomy" id="272562"/>
    <lineage>
        <taxon>Bacteria</taxon>
        <taxon>Bacillati</taxon>
        <taxon>Bacillota</taxon>
        <taxon>Clostridia</taxon>
        <taxon>Eubacteriales</taxon>
        <taxon>Clostridiaceae</taxon>
        <taxon>Clostridium</taxon>
    </lineage>
</organism>